<dbReference type="EC" id="5.3.1.5" evidence="1"/>
<dbReference type="EMBL" id="CP000247">
    <property type="protein sequence ID" value="ABG71642.1"/>
    <property type="molecule type" value="Genomic_DNA"/>
</dbReference>
<dbReference type="RefSeq" id="WP_001149592.1">
    <property type="nucleotide sequence ID" value="NC_008253.1"/>
</dbReference>
<dbReference type="SMR" id="Q0TBN7"/>
<dbReference type="GeneID" id="75173765"/>
<dbReference type="KEGG" id="ecp:ECP_3668"/>
<dbReference type="HOGENOM" id="CLU_037261_1_0_6"/>
<dbReference type="Proteomes" id="UP000009182">
    <property type="component" value="Chromosome"/>
</dbReference>
<dbReference type="GO" id="GO:0005737">
    <property type="term" value="C:cytoplasm"/>
    <property type="evidence" value="ECO:0007669"/>
    <property type="project" value="UniProtKB-SubCell"/>
</dbReference>
<dbReference type="GO" id="GO:0000287">
    <property type="term" value="F:magnesium ion binding"/>
    <property type="evidence" value="ECO:0007669"/>
    <property type="project" value="UniProtKB-UniRule"/>
</dbReference>
<dbReference type="GO" id="GO:0009045">
    <property type="term" value="F:xylose isomerase activity"/>
    <property type="evidence" value="ECO:0007669"/>
    <property type="project" value="UniProtKB-UniRule"/>
</dbReference>
<dbReference type="GO" id="GO:0042732">
    <property type="term" value="P:D-xylose metabolic process"/>
    <property type="evidence" value="ECO:0007669"/>
    <property type="project" value="UniProtKB-UniRule"/>
</dbReference>
<dbReference type="FunFam" id="3.20.20.150:FF:000002">
    <property type="entry name" value="Xylose isomerase"/>
    <property type="match status" value="1"/>
</dbReference>
<dbReference type="Gene3D" id="3.20.20.150">
    <property type="entry name" value="Divalent-metal-dependent TIM barrel enzymes"/>
    <property type="match status" value="1"/>
</dbReference>
<dbReference type="HAMAP" id="MF_00455">
    <property type="entry name" value="Xylose_isom_A"/>
    <property type="match status" value="1"/>
</dbReference>
<dbReference type="InterPro" id="IPR036237">
    <property type="entry name" value="Xyl_isomerase-like_sf"/>
</dbReference>
<dbReference type="InterPro" id="IPR013452">
    <property type="entry name" value="Xylose_isom_bac"/>
</dbReference>
<dbReference type="InterPro" id="IPR001998">
    <property type="entry name" value="Xylose_isomerase"/>
</dbReference>
<dbReference type="NCBIfam" id="NF003998">
    <property type="entry name" value="PRK05474.1"/>
    <property type="match status" value="1"/>
</dbReference>
<dbReference type="NCBIfam" id="TIGR02630">
    <property type="entry name" value="xylose_isom_A"/>
    <property type="match status" value="1"/>
</dbReference>
<dbReference type="PANTHER" id="PTHR48408">
    <property type="match status" value="1"/>
</dbReference>
<dbReference type="PANTHER" id="PTHR48408:SF1">
    <property type="entry name" value="XYLOSE ISOMERASE"/>
    <property type="match status" value="1"/>
</dbReference>
<dbReference type="PRINTS" id="PR00688">
    <property type="entry name" value="XYLOSISMRASE"/>
</dbReference>
<dbReference type="SUPFAM" id="SSF51658">
    <property type="entry name" value="Xylose isomerase-like"/>
    <property type="match status" value="1"/>
</dbReference>
<dbReference type="PROSITE" id="PS51415">
    <property type="entry name" value="XYLOSE_ISOMERASE"/>
    <property type="match status" value="1"/>
</dbReference>
<feature type="chain" id="PRO_1000026439" description="Xylose isomerase">
    <location>
        <begin position="1"/>
        <end position="440"/>
    </location>
</feature>
<feature type="active site" evidence="1">
    <location>
        <position position="101"/>
    </location>
</feature>
<feature type="active site" evidence="1">
    <location>
        <position position="104"/>
    </location>
</feature>
<feature type="binding site" evidence="1">
    <location>
        <position position="232"/>
    </location>
    <ligand>
        <name>Mg(2+)</name>
        <dbReference type="ChEBI" id="CHEBI:18420"/>
        <label>1</label>
    </ligand>
</feature>
<feature type="binding site" evidence="1">
    <location>
        <position position="268"/>
    </location>
    <ligand>
        <name>Mg(2+)</name>
        <dbReference type="ChEBI" id="CHEBI:18420"/>
        <label>1</label>
    </ligand>
</feature>
<feature type="binding site" evidence="1">
    <location>
        <position position="268"/>
    </location>
    <ligand>
        <name>Mg(2+)</name>
        <dbReference type="ChEBI" id="CHEBI:18420"/>
        <label>2</label>
    </ligand>
</feature>
<feature type="binding site" evidence="1">
    <location>
        <position position="271"/>
    </location>
    <ligand>
        <name>Mg(2+)</name>
        <dbReference type="ChEBI" id="CHEBI:18420"/>
        <label>2</label>
    </ligand>
</feature>
<feature type="binding site" evidence="1">
    <location>
        <position position="296"/>
    </location>
    <ligand>
        <name>Mg(2+)</name>
        <dbReference type="ChEBI" id="CHEBI:18420"/>
        <label>1</label>
    </ligand>
</feature>
<feature type="binding site" evidence="1">
    <location>
        <position position="307"/>
    </location>
    <ligand>
        <name>Mg(2+)</name>
        <dbReference type="ChEBI" id="CHEBI:18420"/>
        <label>2</label>
    </ligand>
</feature>
<feature type="binding site" evidence="1">
    <location>
        <position position="309"/>
    </location>
    <ligand>
        <name>Mg(2+)</name>
        <dbReference type="ChEBI" id="CHEBI:18420"/>
        <label>2</label>
    </ligand>
</feature>
<feature type="binding site" evidence="1">
    <location>
        <position position="339"/>
    </location>
    <ligand>
        <name>Mg(2+)</name>
        <dbReference type="ChEBI" id="CHEBI:18420"/>
        <label>1</label>
    </ligand>
</feature>
<protein>
    <recommendedName>
        <fullName evidence="1">Xylose isomerase</fullName>
        <ecNumber evidence="1">5.3.1.5</ecNumber>
    </recommendedName>
</protein>
<proteinExistence type="inferred from homology"/>
<comment type="catalytic activity">
    <reaction evidence="1">
        <text>alpha-D-xylose = alpha-D-xylulofuranose</text>
        <dbReference type="Rhea" id="RHEA:22816"/>
        <dbReference type="ChEBI" id="CHEBI:28518"/>
        <dbReference type="ChEBI" id="CHEBI:188998"/>
        <dbReference type="EC" id="5.3.1.5"/>
    </reaction>
</comment>
<comment type="cofactor">
    <cofactor evidence="1">
        <name>Mg(2+)</name>
        <dbReference type="ChEBI" id="CHEBI:18420"/>
    </cofactor>
    <text evidence="1">Binds 2 magnesium ions per subunit.</text>
</comment>
<comment type="subunit">
    <text evidence="1">Homotetramer.</text>
</comment>
<comment type="subcellular location">
    <subcellularLocation>
        <location evidence="1">Cytoplasm</location>
    </subcellularLocation>
</comment>
<comment type="similarity">
    <text evidence="1">Belongs to the xylose isomerase family.</text>
</comment>
<gene>
    <name evidence="1" type="primary">xylA</name>
    <name type="ordered locus">ECP_3668</name>
</gene>
<evidence type="ECO:0000255" key="1">
    <source>
        <dbReference type="HAMAP-Rule" id="MF_00455"/>
    </source>
</evidence>
<accession>Q0TBN7</accession>
<keyword id="KW-0119">Carbohydrate metabolism</keyword>
<keyword id="KW-0963">Cytoplasm</keyword>
<keyword id="KW-0413">Isomerase</keyword>
<keyword id="KW-0460">Magnesium</keyword>
<keyword id="KW-0479">Metal-binding</keyword>
<keyword id="KW-0859">Xylose metabolism</keyword>
<reference key="1">
    <citation type="journal article" date="2006" name="Mol. Microbiol.">
        <title>Role of pathogenicity island-associated integrases in the genome plasticity of uropathogenic Escherichia coli strain 536.</title>
        <authorList>
            <person name="Hochhut B."/>
            <person name="Wilde C."/>
            <person name="Balling G."/>
            <person name="Middendorf B."/>
            <person name="Dobrindt U."/>
            <person name="Brzuszkiewicz E."/>
            <person name="Gottschalk G."/>
            <person name="Carniel E."/>
            <person name="Hacker J."/>
        </authorList>
    </citation>
    <scope>NUCLEOTIDE SEQUENCE [LARGE SCALE GENOMIC DNA]</scope>
    <source>
        <strain>536 / UPEC</strain>
    </source>
</reference>
<sequence length="440" mass="49719">MQAYFDQLDRVRYEGSKSSNPLAFRHYNPDELVLGKRMEEHLRFAACYWHTFCWNGADMFGVGAFNRPWQQPGEALALAKRKADVAFEFFHKLHVPFYCFHDVDVSPEGASLKEYINNFAQMVDVLAGKQEESGVKLLWGTANCFTNPRYGAGAATNPDPEVFSWAATQVVTAMEATHKLGGENYVLWGGREGYETLLNTDLRQEREQLGRFMQMVVEHKHKIGFQGTLLIEPKPQEPTKHQYDYDAATVYGFLKQFGLEKEIKLNIEANHATLAGHSFHHEIATAIALGLFGSVDANRGDAQLGWDTDQFPNSVEENALVMYEILKAGGFTTGGLNFDAKVRRQSTDKYDLFYGHIGAMDTMALALKIAARMIEDGELDKRIAQRYSGWNSELGQQILKGQMSLADLAKYAQEHNLSPVHQSGRQEQLENLVNHYLFDK</sequence>
<organism>
    <name type="scientific">Escherichia coli O6:K15:H31 (strain 536 / UPEC)</name>
    <dbReference type="NCBI Taxonomy" id="362663"/>
    <lineage>
        <taxon>Bacteria</taxon>
        <taxon>Pseudomonadati</taxon>
        <taxon>Pseudomonadota</taxon>
        <taxon>Gammaproteobacteria</taxon>
        <taxon>Enterobacterales</taxon>
        <taxon>Enterobacteriaceae</taxon>
        <taxon>Escherichia</taxon>
    </lineage>
</organism>
<name>XYLA_ECOL5</name>